<evidence type="ECO:0000255" key="1"/>
<evidence type="ECO:0000255" key="2">
    <source>
        <dbReference type="HAMAP-Rule" id="MF_00684"/>
    </source>
</evidence>
<evidence type="ECO:0000269" key="3">
    <source>
    </source>
</evidence>
<evidence type="ECO:0000305" key="4"/>
<evidence type="ECO:0000305" key="5">
    <source>
    </source>
</evidence>
<evidence type="ECO:0007829" key="6">
    <source>
        <dbReference type="PDB" id="1TE7"/>
    </source>
</evidence>
<name>AC4CH_ECOLI</name>
<protein>
    <recommendedName>
        <fullName evidence="2 4">N(4)-acetylcytidine amidohydrolase</fullName>
        <shortName evidence="2 4">ac4C amidohydrolase</shortName>
        <ecNumber evidence="2 3">3.5.1.135</ecNumber>
    </recommendedName>
</protein>
<sequence>MQPNDITFFQRFQDDILAGRKTITIRDESESHFKTGDVLRVGRFEDDGYFCTIEVTATSTVTLDTLTEKHAEQENMTLTELKKVIADIYPGQTQFYVIEFKCL</sequence>
<gene>
    <name type="primary">yqfB</name>
    <name type="ordered locus">b2900</name>
    <name type="ordered locus">JW2868</name>
</gene>
<organism>
    <name type="scientific">Escherichia coli (strain K12)</name>
    <dbReference type="NCBI Taxonomy" id="83333"/>
    <lineage>
        <taxon>Bacteria</taxon>
        <taxon>Pseudomonadati</taxon>
        <taxon>Pseudomonadota</taxon>
        <taxon>Gammaproteobacteria</taxon>
        <taxon>Enterobacterales</taxon>
        <taxon>Enterobacteriaceae</taxon>
        <taxon>Escherichia</taxon>
    </lineage>
</organism>
<dbReference type="EC" id="3.5.1.135" evidence="2 3"/>
<dbReference type="EMBL" id="U28375">
    <property type="protein sequence ID" value="AAA83081.1"/>
    <property type="molecule type" value="Genomic_DNA"/>
</dbReference>
<dbReference type="EMBL" id="U00096">
    <property type="protein sequence ID" value="AAC75938.1"/>
    <property type="molecule type" value="Genomic_DNA"/>
</dbReference>
<dbReference type="EMBL" id="AP009048">
    <property type="protein sequence ID" value="BAE76965.1"/>
    <property type="molecule type" value="Genomic_DNA"/>
</dbReference>
<dbReference type="PIR" id="D65074">
    <property type="entry name" value="D65074"/>
</dbReference>
<dbReference type="RefSeq" id="NP_417376.1">
    <property type="nucleotide sequence ID" value="NC_000913.3"/>
</dbReference>
<dbReference type="RefSeq" id="WP_001182957.1">
    <property type="nucleotide sequence ID" value="NZ_SSUV01000019.1"/>
</dbReference>
<dbReference type="PDB" id="1TE7">
    <property type="method" value="NMR"/>
    <property type="chains" value="A=1-103"/>
</dbReference>
<dbReference type="PDBsum" id="1TE7"/>
<dbReference type="SMR" id="P67603"/>
<dbReference type="BioGRID" id="4263159">
    <property type="interactions" value="127"/>
</dbReference>
<dbReference type="FunCoup" id="P67603">
    <property type="interactions" value="29"/>
</dbReference>
<dbReference type="IntAct" id="P67603">
    <property type="interactions" value="1"/>
</dbReference>
<dbReference type="STRING" id="511145.b2900"/>
<dbReference type="jPOST" id="P67603"/>
<dbReference type="PaxDb" id="511145-b2900"/>
<dbReference type="DNASU" id="947380"/>
<dbReference type="EnsemblBacteria" id="AAC75938">
    <property type="protein sequence ID" value="AAC75938"/>
    <property type="gene ID" value="b2900"/>
</dbReference>
<dbReference type="GeneID" id="75173001"/>
<dbReference type="GeneID" id="947380"/>
<dbReference type="KEGG" id="ecj:JW2868"/>
<dbReference type="KEGG" id="eco:b2900"/>
<dbReference type="KEGG" id="ecoc:C3026_15900"/>
<dbReference type="PATRIC" id="fig|511145.12.peg.2995"/>
<dbReference type="EchoBASE" id="EB2888"/>
<dbReference type="eggNOG" id="COG3097">
    <property type="taxonomic scope" value="Bacteria"/>
</dbReference>
<dbReference type="HOGENOM" id="CLU_152586_0_0_6"/>
<dbReference type="InParanoid" id="P67603"/>
<dbReference type="OMA" id="HARQENM"/>
<dbReference type="OrthoDB" id="8590202at2"/>
<dbReference type="PhylomeDB" id="P67603"/>
<dbReference type="BioCyc" id="EcoCyc:G7513-MONOMER"/>
<dbReference type="BioCyc" id="MetaCyc:G7513-MONOMER"/>
<dbReference type="BRENDA" id="3.5.1.135">
    <property type="organism ID" value="2026"/>
</dbReference>
<dbReference type="EvolutionaryTrace" id="P67603"/>
<dbReference type="PRO" id="PR:P67603"/>
<dbReference type="Proteomes" id="UP000000625">
    <property type="component" value="Chromosome"/>
</dbReference>
<dbReference type="GO" id="GO:0005829">
    <property type="term" value="C:cytosol"/>
    <property type="evidence" value="ECO:0000314"/>
    <property type="project" value="EcoCyc"/>
</dbReference>
<dbReference type="GO" id="GO:0016813">
    <property type="term" value="F:hydrolase activity, acting on carbon-nitrogen (but not peptide) bonds, in linear amidines"/>
    <property type="evidence" value="ECO:0007669"/>
    <property type="project" value="UniProtKB-UniRule"/>
</dbReference>
<dbReference type="GO" id="GO:0106251">
    <property type="term" value="F:N4-acetylcytidine amidohydrolase activity"/>
    <property type="evidence" value="ECO:0000314"/>
    <property type="project" value="EcoCyc"/>
</dbReference>
<dbReference type="GO" id="GO:0046135">
    <property type="term" value="P:pyrimidine nucleoside catabolic process"/>
    <property type="evidence" value="ECO:0000315"/>
    <property type="project" value="EcoCyc"/>
</dbReference>
<dbReference type="CDD" id="cd06552">
    <property type="entry name" value="ASCH_yqfb_like"/>
    <property type="match status" value="1"/>
</dbReference>
<dbReference type="FunFam" id="2.30.130.30:FF:000001">
    <property type="entry name" value="UPF0267 protein YqfB"/>
    <property type="match status" value="1"/>
</dbReference>
<dbReference type="Gene3D" id="2.30.130.30">
    <property type="entry name" value="Hypothetical protein"/>
    <property type="match status" value="1"/>
</dbReference>
<dbReference type="HAMAP" id="MF_00684">
    <property type="entry name" value="ac4C_amidohydr"/>
    <property type="match status" value="1"/>
</dbReference>
<dbReference type="InterPro" id="IPR008314">
    <property type="entry name" value="AC4CH"/>
</dbReference>
<dbReference type="InterPro" id="IPR007374">
    <property type="entry name" value="ASCH_domain"/>
</dbReference>
<dbReference type="InterPro" id="IPR015947">
    <property type="entry name" value="PUA-like_sf"/>
</dbReference>
<dbReference type="NCBIfam" id="NF003443">
    <property type="entry name" value="PRK04980.1"/>
    <property type="match status" value="1"/>
</dbReference>
<dbReference type="PANTHER" id="PTHR38088">
    <property type="entry name" value="UCP029143 FAMILY PROTEIN"/>
    <property type="match status" value="1"/>
</dbReference>
<dbReference type="PANTHER" id="PTHR38088:SF2">
    <property type="entry name" value="UCP029143 FAMILY PROTEIN"/>
    <property type="match status" value="1"/>
</dbReference>
<dbReference type="Pfam" id="PF04266">
    <property type="entry name" value="ASCH"/>
    <property type="match status" value="1"/>
</dbReference>
<dbReference type="PIRSF" id="PIRSF029143">
    <property type="entry name" value="UCP029143"/>
    <property type="match status" value="1"/>
</dbReference>
<dbReference type="SMART" id="SM01022">
    <property type="entry name" value="ASCH"/>
    <property type="match status" value="1"/>
</dbReference>
<dbReference type="SUPFAM" id="SSF88697">
    <property type="entry name" value="PUA domain-like"/>
    <property type="match status" value="1"/>
</dbReference>
<accession>P67603</accession>
<accession>Q2M9U1</accession>
<accession>Q46828</accession>
<proteinExistence type="evidence at protein level"/>
<reference key="1">
    <citation type="journal article" date="1997" name="Science">
        <title>The complete genome sequence of Escherichia coli K-12.</title>
        <authorList>
            <person name="Blattner F.R."/>
            <person name="Plunkett G. III"/>
            <person name="Bloch C.A."/>
            <person name="Perna N.T."/>
            <person name="Burland V."/>
            <person name="Riley M."/>
            <person name="Collado-Vides J."/>
            <person name="Glasner J.D."/>
            <person name="Rode C.K."/>
            <person name="Mayhew G.F."/>
            <person name="Gregor J."/>
            <person name="Davis N.W."/>
            <person name="Kirkpatrick H.A."/>
            <person name="Goeden M.A."/>
            <person name="Rose D.J."/>
            <person name="Mau B."/>
            <person name="Shao Y."/>
        </authorList>
    </citation>
    <scope>NUCLEOTIDE SEQUENCE [LARGE SCALE GENOMIC DNA]</scope>
    <source>
        <strain>K12 / MG1655 / ATCC 47076</strain>
    </source>
</reference>
<reference key="2">
    <citation type="journal article" date="2006" name="Mol. Syst. Biol.">
        <title>Highly accurate genome sequences of Escherichia coli K-12 strains MG1655 and W3110.</title>
        <authorList>
            <person name="Hayashi K."/>
            <person name="Morooka N."/>
            <person name="Yamamoto Y."/>
            <person name="Fujita K."/>
            <person name="Isono K."/>
            <person name="Choi S."/>
            <person name="Ohtsubo E."/>
            <person name="Baba T."/>
            <person name="Wanner B.L."/>
            <person name="Mori H."/>
            <person name="Horiuchi T."/>
        </authorList>
    </citation>
    <scope>NUCLEOTIDE SEQUENCE [LARGE SCALE GENOMIC DNA]</scope>
    <source>
        <strain>K12 / W3110 / ATCC 27325 / DSM 5911</strain>
    </source>
</reference>
<reference key="3">
    <citation type="journal article" date="2020" name="Sci. Rep.">
        <title>YqfB protein from Escherichia coli: an atypical amidohydrolase active towards N4-acylcytosine derivatives.</title>
        <authorList>
            <person name="Stanislauskiene R."/>
            <person name="Laurynenas A."/>
            <person name="Rutkiene R."/>
            <person name="Aucynaite A."/>
            <person name="Tauraite D."/>
            <person name="Meskiene R."/>
            <person name="Urbeliene N."/>
            <person name="Kaupinis A."/>
            <person name="Valius M."/>
            <person name="Kaliniene L."/>
            <person name="Meskys R."/>
        </authorList>
    </citation>
    <scope>FUNCTION</scope>
    <scope>CATALYTIC ACTIVITY</scope>
    <scope>REACTION MECHANISM</scope>
    <scope>ACTIVITY REGULATION</scope>
    <scope>BIOPHYSICOCHEMICAL PROPERTIES</scope>
    <scope>SUBUNIT</scope>
    <scope>DISRUPTION PHENOTYPE</scope>
    <scope>MUTAGENESIS OF LYS-21; THR-24; ARG-26; ASP-27; HIS-70; GLU-74 AND TYR-89</scope>
    <scope>ACTIVE SITE</scope>
</reference>
<reference key="4">
    <citation type="journal article" date="2005" name="J. Am. Chem. Soc.">
        <title>G-matrix Fourier transform NOESY-based protocol for high-quality protein structure determination.</title>
        <authorList>
            <person name="Shen Y."/>
            <person name="Atreya H.S."/>
            <person name="Liu G."/>
            <person name="Szyperski T."/>
        </authorList>
    </citation>
    <scope>STRUCTURE BY NMR</scope>
</reference>
<feature type="chain" id="PRO_0000214600" description="N(4)-acetylcytidine amidohydrolase">
    <location>
        <begin position="1"/>
        <end position="103"/>
    </location>
</feature>
<feature type="domain" description="ASCH" evidence="1">
    <location>
        <begin position="6"/>
        <end position="101"/>
    </location>
</feature>
<feature type="active site" description="Proton acceptor" evidence="2 5">
    <location>
        <position position="21"/>
    </location>
</feature>
<feature type="active site" description="Nucleophile" evidence="2 5">
    <location>
        <position position="24"/>
    </location>
</feature>
<feature type="active site" description="Proton donor" evidence="2 5">
    <location>
        <position position="74"/>
    </location>
</feature>
<feature type="mutagenesis site" description="Loss of activity." evidence="3">
    <original>K</original>
    <variation>A</variation>
    <location>
        <position position="21"/>
    </location>
</feature>
<feature type="mutagenesis site" description="Loss of activity." evidence="3">
    <original>T</original>
    <variation>A</variation>
    <location>
        <position position="24"/>
    </location>
</feature>
<feature type="mutagenesis site" description="Loss of activity." evidence="3">
    <original>R</original>
    <variation>A</variation>
    <location>
        <position position="26"/>
    </location>
</feature>
<feature type="mutagenesis site" description="2-fold decrease in catalytic efficiency toward N(4)-acetylcytidine and 3-fold decrease in catalytic efficiency toward N(4)-acetylcytosine." evidence="3">
    <original>D</original>
    <variation>A</variation>
    <location>
        <position position="27"/>
    </location>
</feature>
<feature type="mutagenesis site" description="5-fold decrease in catalytic efficiency toward N(4)-acetylcytidine and 14-fold decrease in catalytic efficiency toward N(4)-acetylcytosine." evidence="3">
    <original>H</original>
    <variation>A</variation>
    <location>
        <position position="70"/>
    </location>
</feature>
<feature type="mutagenesis site" description="73-fold decrease in catalytic efficiency toward N(4)-acetylcytidine and 143-fold decrease in catalytic efficiency toward N(4)-acetylcytosine." evidence="3">
    <original>E</original>
    <variation>A</variation>
    <location>
        <position position="74"/>
    </location>
</feature>
<feature type="mutagenesis site" description="115-fold decrease in catalytic efficiency toward N(4)-acetylcytidine and 312-fold decrease in catalytic efficiency toward N(4)-acetylcytosine." evidence="3">
    <original>Y</original>
    <variation>A</variation>
    <location>
        <position position="89"/>
    </location>
</feature>
<feature type="helix" evidence="6">
    <location>
        <begin position="10"/>
        <end position="17"/>
    </location>
</feature>
<feature type="strand" evidence="6">
    <location>
        <begin position="22"/>
        <end position="26"/>
    </location>
</feature>
<feature type="helix" evidence="6">
    <location>
        <begin position="28"/>
        <end position="30"/>
    </location>
</feature>
<feature type="strand" evidence="6">
    <location>
        <begin position="37"/>
        <end position="43"/>
    </location>
</feature>
<feature type="turn" evidence="6">
    <location>
        <begin position="44"/>
        <end position="46"/>
    </location>
</feature>
<feature type="strand" evidence="6">
    <location>
        <begin position="47"/>
        <end position="61"/>
    </location>
</feature>
<feature type="turn" evidence="6">
    <location>
        <begin position="64"/>
        <end position="66"/>
    </location>
</feature>
<feature type="helix" evidence="6">
    <location>
        <begin position="69"/>
        <end position="73"/>
    </location>
</feature>
<feature type="helix" evidence="6">
    <location>
        <begin position="78"/>
        <end position="88"/>
    </location>
</feature>
<feature type="strand" evidence="6">
    <location>
        <begin position="95"/>
        <end position="101"/>
    </location>
</feature>
<comment type="function">
    <text evidence="3">Catalyzes the hydrolysis of N(4)-acetylcytidine (ac4C). Can also hydrolyze N(4)-acetyl-2'-deoxycytidine and N(4)-acetylcytosine with lower efficiency. Has weaker activity towards a wide range of structurally different N(4)-acylated cytosines and cytidines.</text>
</comment>
<comment type="catalytic activity">
    <reaction evidence="2 3">
        <text>N(4)-acetylcytidine + H2O = cytidine + acetate + H(+)</text>
        <dbReference type="Rhea" id="RHEA:62932"/>
        <dbReference type="ChEBI" id="CHEBI:15377"/>
        <dbReference type="ChEBI" id="CHEBI:15378"/>
        <dbReference type="ChEBI" id="CHEBI:17562"/>
        <dbReference type="ChEBI" id="CHEBI:30089"/>
        <dbReference type="ChEBI" id="CHEBI:70989"/>
        <dbReference type="EC" id="3.5.1.135"/>
    </reaction>
</comment>
<comment type="catalytic activity">
    <reaction evidence="2 3">
        <text>N(4)-acetyl-2'-deoxycytidine + H2O = 2'-deoxycytidine + acetate + H(+)</text>
        <dbReference type="Rhea" id="RHEA:62936"/>
        <dbReference type="ChEBI" id="CHEBI:15377"/>
        <dbReference type="ChEBI" id="CHEBI:15378"/>
        <dbReference type="ChEBI" id="CHEBI:15698"/>
        <dbReference type="ChEBI" id="CHEBI:30089"/>
        <dbReference type="ChEBI" id="CHEBI:146133"/>
        <dbReference type="EC" id="3.5.1.135"/>
    </reaction>
</comment>
<comment type="catalytic activity">
    <reaction evidence="2 3">
        <text>N(4)-acetylcytosine + H2O = cytosine + acetate + H(+)</text>
        <dbReference type="Rhea" id="RHEA:62940"/>
        <dbReference type="ChEBI" id="CHEBI:15377"/>
        <dbReference type="ChEBI" id="CHEBI:15378"/>
        <dbReference type="ChEBI" id="CHEBI:16040"/>
        <dbReference type="ChEBI" id="CHEBI:30089"/>
        <dbReference type="ChEBI" id="CHEBI:146134"/>
        <dbReference type="EC" id="3.5.1.135"/>
    </reaction>
</comment>
<comment type="activity regulation">
    <text evidence="3">Unaffected by known inhibitors of amidohydrolases: PMSF, p-hydroxymercuribenzoate, p-chloromercuribenzoate and EDTA.</text>
</comment>
<comment type="biophysicochemical properties">
    <kinetics>
        <KM evidence="3">62 uM for N(4)-acetylcytidine</KM>
        <KM evidence="3">400 uM for N(4)-acetyl-2'deoxycytidine</KM>
        <KM evidence="3">70 uM for N(4)-acetylcytosine</KM>
        <KM evidence="3">140 uM for N(4)-hexanoyl-2'-deoxycytidine</KM>
        <KM evidence="3">2100 uM for N(4)-acetyl-5-fluorocytosine</KM>
        <KM evidence="3">1900 uM for N(4)-isobutyryl-2'-deoxycytidine</KM>
        <KM evidence="3">5100 uM for N(4)-benzoylcytidine</KM>
        <KM evidence="3">300 uM for N(4)-benzoyl-2'-deoxycytidine</KM>
        <text evidence="3">kcat is 157 sec(-1) with N(4)-acetylcytidine as substrate. kcat is 101 sec(-1) with N(4)-acetyl-2'deoxycytidine as substrate. kcat is 70 sec(-1) with N(4)-acetylcytosine as substrate. kcat is 24 sec(-1) with N(4)-hexanoyl-2'-deoxycytidine as substrate. kcat is 90 sec(-1) with N(4)-acetyl-5-fluorocytosine as substrate. kcat is 75 sec(-1) with N(4)-isobutyryl-2'-deoxycytidine as substrate. kcat is 1.8 sec(-1) with N(4)-benzoylcytidine as substrate. kcat is 0.07 sec(-1) with N(4)-benzoyl-2'-deoxycytidine as substrate.</text>
    </kinetics>
    <phDependence>
        <text evidence="3">Optimum pH is 8.0.</text>
    </phDependence>
    <temperatureDependence>
        <text evidence="3">Optimum temperature is below 20 degrees Celsius.</text>
    </temperatureDependence>
</comment>
<comment type="subunit">
    <text evidence="3">Monomer.</text>
</comment>
<comment type="disruption phenotype">
    <text evidence="3">The mutant lacking the yqfB gene retains the ability to grow, albeit poorly, on N(4)-acetylcytosine as a source of uracil.</text>
</comment>
<comment type="similarity">
    <text evidence="2 4">Belongs to the N(4)-acetylcytidine amidohydrolase family.</text>
</comment>
<keyword id="KW-0002">3D-structure</keyword>
<keyword id="KW-0378">Hydrolase</keyword>
<keyword id="KW-1185">Reference proteome</keyword>